<sequence length="139" mass="15199">MASVQAYAQWVTVHLINSMSSETLSIQNASLSWGKWYKDGDKDAEITSEDVQQKTAPPGGSVNVNSCGRSDASSGTTGGFDLYDGNTKIGRVHWDCPWGSKTNDFDVGERNKNYWVEIGTWNKYGGAIGTVDVEVGRKR</sequence>
<accession>Q00050</accession>
<accession>Q4WFY6</accession>
<dbReference type="EMBL" id="D16501">
    <property type="protein sequence ID" value="BAA03951.1"/>
    <property type="status" value="ALT_FRAME"/>
    <property type="molecule type" value="mRNA"/>
</dbReference>
<dbReference type="EMBL" id="AAHF01000010">
    <property type="protein sequence ID" value="EAL86341.1"/>
    <property type="molecule type" value="Genomic_DNA"/>
</dbReference>
<dbReference type="PIR" id="S47523">
    <property type="entry name" value="S47523"/>
</dbReference>
<dbReference type="RefSeq" id="XP_748379.1">
    <property type="nucleotide sequence ID" value="XM_743286.1"/>
</dbReference>
<dbReference type="SMR" id="Q00050"/>
<dbReference type="STRING" id="330879.Q00050"/>
<dbReference type="EnsemblFungi" id="EAL86341">
    <property type="protein sequence ID" value="EAL86341"/>
    <property type="gene ID" value="AFUA_3G00590"/>
</dbReference>
<dbReference type="GeneID" id="3505795"/>
<dbReference type="KEGG" id="afm:AFUA_3G00590"/>
<dbReference type="VEuPathDB" id="FungiDB:Afu3g00590"/>
<dbReference type="eggNOG" id="ENOG502SSEK">
    <property type="taxonomic scope" value="Eukaryota"/>
</dbReference>
<dbReference type="HOGENOM" id="CLU_115909_0_0_1"/>
<dbReference type="InParanoid" id="Q00050"/>
<dbReference type="OMA" id="VYWDCPW"/>
<dbReference type="OrthoDB" id="2727348at2759"/>
<dbReference type="Proteomes" id="UP000002530">
    <property type="component" value="Chromosome 3"/>
</dbReference>
<dbReference type="GO" id="GO:0030169">
    <property type="term" value="F:low-density lipoprotein particle binding"/>
    <property type="evidence" value="ECO:0000314"/>
    <property type="project" value="AspGD"/>
</dbReference>
<dbReference type="GO" id="GO:0019836">
    <property type="term" value="P:symbiont-mediated hemolysis of host erythrocyte"/>
    <property type="evidence" value="ECO:0007669"/>
    <property type="project" value="InterPro"/>
</dbReference>
<dbReference type="Gene3D" id="2.60.270.50">
    <property type="match status" value="1"/>
</dbReference>
<dbReference type="InterPro" id="IPR009413">
    <property type="entry name" value="Aegerolysin-typ"/>
</dbReference>
<dbReference type="Pfam" id="PF06355">
    <property type="entry name" value="Aegerolysin"/>
    <property type="match status" value="1"/>
</dbReference>
<dbReference type="PIRSF" id="PIRSF007951">
    <property type="entry name" value="Hemolysin, aegerolysin type"/>
    <property type="match status" value="1"/>
</dbReference>
<keyword id="KW-0204">Cytolysis</keyword>
<keyword id="KW-0354">Hemolysis</keyword>
<keyword id="KW-1185">Reference proteome</keyword>
<organism>
    <name type="scientific">Aspergillus fumigatus (strain ATCC MYA-4609 / CBS 101355 / FGSC A1100 / Af293)</name>
    <name type="common">Neosartorya fumigata</name>
    <dbReference type="NCBI Taxonomy" id="330879"/>
    <lineage>
        <taxon>Eukaryota</taxon>
        <taxon>Fungi</taxon>
        <taxon>Dikarya</taxon>
        <taxon>Ascomycota</taxon>
        <taxon>Pezizomycotina</taxon>
        <taxon>Eurotiomycetes</taxon>
        <taxon>Eurotiomycetidae</taxon>
        <taxon>Eurotiales</taxon>
        <taxon>Aspergillaceae</taxon>
        <taxon>Aspergillus</taxon>
        <taxon>Aspergillus subgen. Fumigati</taxon>
    </lineage>
</organism>
<feature type="propeptide" id="PRO_0000000997" evidence="1">
    <location>
        <begin position="1"/>
        <end position="5"/>
    </location>
</feature>
<feature type="chain" id="PRO_0000000998" description="Asp-hemolysin">
    <location>
        <begin position="6"/>
        <end position="139"/>
    </location>
</feature>
<feature type="region of interest" description="Disordered" evidence="2">
    <location>
        <begin position="47"/>
        <end position="79"/>
    </location>
</feature>
<feature type="compositionally biased region" description="Polar residues" evidence="2">
    <location>
        <begin position="62"/>
        <end position="75"/>
    </location>
</feature>
<feature type="sequence conflict" description="In Ref. 1; BAA03951." evidence="3" ref="1">
    <original>Q</original>
    <variation>K</variation>
    <location>
        <position position="27"/>
    </location>
</feature>
<reference key="1">
    <citation type="journal article" date="1994" name="Biochim. Biophys. Acta">
        <title>Cloning and nucleotide sequence of cDNA encoding Asp-hemolysin from Aspergillus fumigatus.</title>
        <authorList>
            <person name="Ebina K."/>
            <person name="Sakagami H."/>
            <person name="Yokota K."/>
            <person name="Kondo H."/>
        </authorList>
    </citation>
    <scope>NUCLEOTIDE SEQUENCE [MRNA]</scope>
    <source>
        <strain>Fresenius-Muramatsu</strain>
    </source>
</reference>
<reference key="2">
    <citation type="journal article" date="2005" name="Nature">
        <title>Genomic sequence of the pathogenic and allergenic filamentous fungus Aspergillus fumigatus.</title>
        <authorList>
            <person name="Nierman W.C."/>
            <person name="Pain A."/>
            <person name="Anderson M.J."/>
            <person name="Wortman J.R."/>
            <person name="Kim H.S."/>
            <person name="Arroyo J."/>
            <person name="Berriman M."/>
            <person name="Abe K."/>
            <person name="Archer D.B."/>
            <person name="Bermejo C."/>
            <person name="Bennett J.W."/>
            <person name="Bowyer P."/>
            <person name="Chen D."/>
            <person name="Collins M."/>
            <person name="Coulsen R."/>
            <person name="Davies R."/>
            <person name="Dyer P.S."/>
            <person name="Farman M.L."/>
            <person name="Fedorova N."/>
            <person name="Fedorova N.D."/>
            <person name="Feldblyum T.V."/>
            <person name="Fischer R."/>
            <person name="Fosker N."/>
            <person name="Fraser A."/>
            <person name="Garcia J.L."/>
            <person name="Garcia M.J."/>
            <person name="Goble A."/>
            <person name="Goldman G.H."/>
            <person name="Gomi K."/>
            <person name="Griffith-Jones S."/>
            <person name="Gwilliam R."/>
            <person name="Haas B.J."/>
            <person name="Haas H."/>
            <person name="Harris D.E."/>
            <person name="Horiuchi H."/>
            <person name="Huang J."/>
            <person name="Humphray S."/>
            <person name="Jimenez J."/>
            <person name="Keller N."/>
            <person name="Khouri H."/>
            <person name="Kitamoto K."/>
            <person name="Kobayashi T."/>
            <person name="Konzack S."/>
            <person name="Kulkarni R."/>
            <person name="Kumagai T."/>
            <person name="Lafton A."/>
            <person name="Latge J.-P."/>
            <person name="Li W."/>
            <person name="Lord A."/>
            <person name="Lu C."/>
            <person name="Majoros W.H."/>
            <person name="May G.S."/>
            <person name="Miller B.L."/>
            <person name="Mohamoud Y."/>
            <person name="Molina M."/>
            <person name="Monod M."/>
            <person name="Mouyna I."/>
            <person name="Mulligan S."/>
            <person name="Murphy L.D."/>
            <person name="O'Neil S."/>
            <person name="Paulsen I."/>
            <person name="Penalva M.A."/>
            <person name="Pertea M."/>
            <person name="Price C."/>
            <person name="Pritchard B.L."/>
            <person name="Quail M.A."/>
            <person name="Rabbinowitsch E."/>
            <person name="Rawlins N."/>
            <person name="Rajandream M.A."/>
            <person name="Reichard U."/>
            <person name="Renauld H."/>
            <person name="Robson G.D."/>
            <person name="Rodriguez de Cordoba S."/>
            <person name="Rodriguez-Pena J.M."/>
            <person name="Ronning C.M."/>
            <person name="Rutter S."/>
            <person name="Salzberg S.L."/>
            <person name="Sanchez M."/>
            <person name="Sanchez-Ferrero J.C."/>
            <person name="Saunders D."/>
            <person name="Seeger K."/>
            <person name="Squares R."/>
            <person name="Squares S."/>
            <person name="Takeuchi M."/>
            <person name="Tekaia F."/>
            <person name="Turner G."/>
            <person name="Vazquez de Aldana C.R."/>
            <person name="Weidman J."/>
            <person name="White O."/>
            <person name="Woodward J.R."/>
            <person name="Yu J.-H."/>
            <person name="Fraser C.M."/>
            <person name="Galagan J.E."/>
            <person name="Asai K."/>
            <person name="Machida M."/>
            <person name="Hall N."/>
            <person name="Barrell B.G."/>
            <person name="Denning D.W."/>
        </authorList>
    </citation>
    <scope>NUCLEOTIDE SEQUENCE [LARGE SCALE GENOMIC DNA]</scope>
    <source>
        <strain>ATCC MYA-4609 / CBS 101355 / FGSC A1100 / Af293</strain>
    </source>
</reference>
<protein>
    <recommendedName>
        <fullName>Asp-hemolysin</fullName>
        <shortName>Asp-HS</shortName>
    </recommendedName>
</protein>
<proteinExistence type="evidence at transcript level"/>
<evidence type="ECO:0000250" key="1"/>
<evidence type="ECO:0000256" key="2">
    <source>
        <dbReference type="SAM" id="MobiDB-lite"/>
    </source>
</evidence>
<evidence type="ECO:0000305" key="3"/>
<gene>
    <name type="ORF">AFUA_3G00590</name>
</gene>
<name>ASPH_ASPFU</name>
<comment type="similarity">
    <text evidence="3">Belongs to the aegerolysin family.</text>
</comment>
<comment type="sequence caution" evidence="3">
    <conflict type="frameshift">
        <sequence resource="EMBL-CDS" id="BAA03951"/>
    </conflict>
</comment>